<geneLocation type="mitochondrion"/>
<gene>
    <name type="primary">MT-CYB</name>
    <name type="synonym">COB</name>
    <name type="synonym">CYTB</name>
    <name type="synonym">MTCYB</name>
</gene>
<comment type="function">
    <text evidence="2">Component of the ubiquinol-cytochrome c reductase complex (complex III or cytochrome b-c1 complex) that is part of the mitochondrial respiratory chain. The b-c1 complex mediates electron transfer from ubiquinol to cytochrome c. Contributes to the generation of a proton gradient across the mitochondrial membrane that is then used for ATP synthesis.</text>
</comment>
<comment type="cofactor">
    <cofactor evidence="2">
        <name>heme b</name>
        <dbReference type="ChEBI" id="CHEBI:60344"/>
    </cofactor>
    <text evidence="2">Binds 2 heme b groups non-covalently.</text>
</comment>
<comment type="subunit">
    <text evidence="2">The cytochrome bc1 complex contains 11 subunits: 3 respiratory subunits (MT-CYB, CYC1 and UQCRFS1), 2 core proteins (UQCRC1 and UQCRC2) and 6 low-molecular weight proteins (UQCRH/QCR6, UQCRB/QCR7, UQCRQ/QCR8, UQCR10/QCR9, UQCR11/QCR10 and a cleavage product of UQCRFS1). This cytochrome bc1 complex then forms a dimer.</text>
</comment>
<comment type="subcellular location">
    <subcellularLocation>
        <location evidence="2">Mitochondrion inner membrane</location>
        <topology evidence="2">Multi-pass membrane protein</topology>
    </subcellularLocation>
</comment>
<comment type="miscellaneous">
    <text evidence="1">Heme 1 (or BL or b562) is low-potential and absorbs at about 562 nm, and heme 2 (or BH or b566) is high-potential and absorbs at about 566 nm.</text>
</comment>
<comment type="similarity">
    <text evidence="3 4">Belongs to the cytochrome b family.</text>
</comment>
<comment type="caution">
    <text evidence="2">The full-length protein contains only eight transmembrane helices, not nine as predicted by bioinformatics tools.</text>
</comment>
<evidence type="ECO:0000250" key="1"/>
<evidence type="ECO:0000250" key="2">
    <source>
        <dbReference type="UniProtKB" id="P00157"/>
    </source>
</evidence>
<evidence type="ECO:0000255" key="3">
    <source>
        <dbReference type="PROSITE-ProRule" id="PRU00967"/>
    </source>
</evidence>
<evidence type="ECO:0000255" key="4">
    <source>
        <dbReference type="PROSITE-ProRule" id="PRU00968"/>
    </source>
</evidence>
<feature type="chain" id="PRO_0000060669" description="Cytochrome b">
    <location>
        <begin position="1"/>
        <end position="379"/>
    </location>
</feature>
<feature type="transmembrane region" description="Helical" evidence="2">
    <location>
        <begin position="33"/>
        <end position="53"/>
    </location>
</feature>
<feature type="transmembrane region" description="Helical" evidence="2">
    <location>
        <begin position="77"/>
        <end position="98"/>
    </location>
</feature>
<feature type="transmembrane region" description="Helical" evidence="2">
    <location>
        <begin position="113"/>
        <end position="133"/>
    </location>
</feature>
<feature type="transmembrane region" description="Helical" evidence="2">
    <location>
        <begin position="178"/>
        <end position="198"/>
    </location>
</feature>
<feature type="transmembrane region" description="Helical" evidence="2">
    <location>
        <begin position="226"/>
        <end position="246"/>
    </location>
</feature>
<feature type="transmembrane region" description="Helical" evidence="2">
    <location>
        <begin position="288"/>
        <end position="308"/>
    </location>
</feature>
<feature type="transmembrane region" description="Helical" evidence="2">
    <location>
        <begin position="320"/>
        <end position="340"/>
    </location>
</feature>
<feature type="transmembrane region" description="Helical" evidence="2">
    <location>
        <begin position="347"/>
        <end position="367"/>
    </location>
</feature>
<feature type="binding site" description="axial binding residue" evidence="2">
    <location>
        <position position="83"/>
    </location>
    <ligand>
        <name>heme b</name>
        <dbReference type="ChEBI" id="CHEBI:60344"/>
        <label>b562</label>
    </ligand>
    <ligandPart>
        <name>Fe</name>
        <dbReference type="ChEBI" id="CHEBI:18248"/>
    </ligandPart>
</feature>
<feature type="binding site" description="axial binding residue" evidence="2">
    <location>
        <position position="97"/>
    </location>
    <ligand>
        <name>heme b</name>
        <dbReference type="ChEBI" id="CHEBI:60344"/>
        <label>b566</label>
    </ligand>
    <ligandPart>
        <name>Fe</name>
        <dbReference type="ChEBI" id="CHEBI:18248"/>
    </ligandPart>
</feature>
<feature type="binding site" description="axial binding residue" evidence="2">
    <location>
        <position position="182"/>
    </location>
    <ligand>
        <name>heme b</name>
        <dbReference type="ChEBI" id="CHEBI:60344"/>
        <label>b562</label>
    </ligand>
    <ligandPart>
        <name>Fe</name>
        <dbReference type="ChEBI" id="CHEBI:18248"/>
    </ligandPart>
</feature>
<feature type="binding site" description="axial binding residue" evidence="2">
    <location>
        <position position="196"/>
    </location>
    <ligand>
        <name>heme b</name>
        <dbReference type="ChEBI" id="CHEBI:60344"/>
        <label>b566</label>
    </ligand>
    <ligandPart>
        <name>Fe</name>
        <dbReference type="ChEBI" id="CHEBI:18248"/>
    </ligandPart>
</feature>
<feature type="binding site" evidence="2">
    <location>
        <position position="201"/>
    </location>
    <ligand>
        <name>a ubiquinone</name>
        <dbReference type="ChEBI" id="CHEBI:16389"/>
    </ligand>
</feature>
<accession>Q85IN3</accession>
<organism>
    <name type="scientific">Bassariscus astutus</name>
    <name type="common">Ringtail</name>
    <name type="synonym">Bassaris astuta</name>
    <dbReference type="NCBI Taxonomy" id="55047"/>
    <lineage>
        <taxon>Eukaryota</taxon>
        <taxon>Metazoa</taxon>
        <taxon>Chordata</taxon>
        <taxon>Craniata</taxon>
        <taxon>Vertebrata</taxon>
        <taxon>Euteleostomi</taxon>
        <taxon>Mammalia</taxon>
        <taxon>Eutheria</taxon>
        <taxon>Laurasiatheria</taxon>
        <taxon>Carnivora</taxon>
        <taxon>Caniformia</taxon>
        <taxon>Musteloidea</taxon>
        <taxon>Procyonidae</taxon>
        <taxon>Bassariscus</taxon>
    </lineage>
</organism>
<keyword id="KW-0249">Electron transport</keyword>
<keyword id="KW-0349">Heme</keyword>
<keyword id="KW-0408">Iron</keyword>
<keyword id="KW-0472">Membrane</keyword>
<keyword id="KW-0479">Metal-binding</keyword>
<keyword id="KW-0496">Mitochondrion</keyword>
<keyword id="KW-0999">Mitochondrion inner membrane</keyword>
<keyword id="KW-0679">Respiratory chain</keyword>
<keyword id="KW-0812">Transmembrane</keyword>
<keyword id="KW-1133">Transmembrane helix</keyword>
<keyword id="KW-0813">Transport</keyword>
<keyword id="KW-0830">Ubiquinone</keyword>
<name>CYB_BASAS</name>
<protein>
    <recommendedName>
        <fullName>Cytochrome b</fullName>
    </recommendedName>
    <alternativeName>
        <fullName>Complex III subunit 3</fullName>
    </alternativeName>
    <alternativeName>
        <fullName>Complex III subunit III</fullName>
    </alternativeName>
    <alternativeName>
        <fullName>Cytochrome b-c1 complex subunit 3</fullName>
    </alternativeName>
    <alternativeName>
        <fullName>Ubiquinol-cytochrome-c reductase complex cytochrome b subunit</fullName>
    </alternativeName>
</protein>
<proteinExistence type="inferred from homology"/>
<reference key="1">
    <citation type="journal article" date="2003" name="Syst. Biol.">
        <title>Type I STS markers are more informative than cytochrome B in phylogenetic reconstruction of the Mustelidae (Mammalia: Carnivora).</title>
        <authorList>
            <person name="Koepfli K.-P."/>
            <person name="Wayne R.K."/>
        </authorList>
    </citation>
    <scope>NUCLEOTIDE SEQUENCE [GENOMIC DNA]</scope>
</reference>
<sequence length="379" mass="42684">MTNIRKTHPLAKIINNSFIDLPAPSNISAWWNFGSLLGICLLLQIATGLFLAMHYTSDTTTAFSSVTHICRDVNYGWIIRYMHANGASMFFICLFLHVGRGLYYGSYTFSETWNVGIVLLFTVMATAFMGYVLPWGQMSFWGATVITNLLSAIPYIGATLVEWIWGGFSVDKATLTRFFAFHFILPFIISALAMIHLLFLHETGSNNPSGMTSESDKIPFHPYYTIKDILGILLLIFILMGLVLFMPDLLGDPDNYTPANPLNTPPHIKPEWYFLFAYAILRSIPNKLGGVLALVLSILILAIIPFLHTSKQRSMTFRPLSQCLFWLLVADLLVLTWIGGQPVEYPFITIGQLASILYFMILLVLMPTTSIIENNLLKW</sequence>
<dbReference type="EMBL" id="AF498159">
    <property type="protein sequence ID" value="AAP19705.1"/>
    <property type="molecule type" value="Genomic_DNA"/>
</dbReference>
<dbReference type="SMR" id="Q85IN3"/>
<dbReference type="GO" id="GO:0005743">
    <property type="term" value="C:mitochondrial inner membrane"/>
    <property type="evidence" value="ECO:0007669"/>
    <property type="project" value="UniProtKB-SubCell"/>
</dbReference>
<dbReference type="GO" id="GO:0045275">
    <property type="term" value="C:respiratory chain complex III"/>
    <property type="evidence" value="ECO:0007669"/>
    <property type="project" value="InterPro"/>
</dbReference>
<dbReference type="GO" id="GO:0046872">
    <property type="term" value="F:metal ion binding"/>
    <property type="evidence" value="ECO:0007669"/>
    <property type="project" value="UniProtKB-KW"/>
</dbReference>
<dbReference type="GO" id="GO:0008121">
    <property type="term" value="F:ubiquinol-cytochrome-c reductase activity"/>
    <property type="evidence" value="ECO:0007669"/>
    <property type="project" value="InterPro"/>
</dbReference>
<dbReference type="GO" id="GO:0006122">
    <property type="term" value="P:mitochondrial electron transport, ubiquinol to cytochrome c"/>
    <property type="evidence" value="ECO:0007669"/>
    <property type="project" value="TreeGrafter"/>
</dbReference>
<dbReference type="CDD" id="cd00290">
    <property type="entry name" value="cytochrome_b_C"/>
    <property type="match status" value="1"/>
</dbReference>
<dbReference type="CDD" id="cd00284">
    <property type="entry name" value="Cytochrome_b_N"/>
    <property type="match status" value="1"/>
</dbReference>
<dbReference type="FunFam" id="1.20.810.10:FF:000002">
    <property type="entry name" value="Cytochrome b"/>
    <property type="match status" value="1"/>
</dbReference>
<dbReference type="Gene3D" id="1.20.810.10">
    <property type="entry name" value="Cytochrome Bc1 Complex, Chain C"/>
    <property type="match status" value="1"/>
</dbReference>
<dbReference type="InterPro" id="IPR005798">
    <property type="entry name" value="Cyt_b/b6_C"/>
</dbReference>
<dbReference type="InterPro" id="IPR036150">
    <property type="entry name" value="Cyt_b/b6_C_sf"/>
</dbReference>
<dbReference type="InterPro" id="IPR005797">
    <property type="entry name" value="Cyt_b/b6_N"/>
</dbReference>
<dbReference type="InterPro" id="IPR027387">
    <property type="entry name" value="Cytb/b6-like_sf"/>
</dbReference>
<dbReference type="InterPro" id="IPR030689">
    <property type="entry name" value="Cytochrome_b"/>
</dbReference>
<dbReference type="InterPro" id="IPR048260">
    <property type="entry name" value="Cytochrome_b_C_euk/bac"/>
</dbReference>
<dbReference type="InterPro" id="IPR048259">
    <property type="entry name" value="Cytochrome_b_N_euk/bac"/>
</dbReference>
<dbReference type="InterPro" id="IPR016174">
    <property type="entry name" value="Di-haem_cyt_TM"/>
</dbReference>
<dbReference type="PANTHER" id="PTHR19271">
    <property type="entry name" value="CYTOCHROME B"/>
    <property type="match status" value="1"/>
</dbReference>
<dbReference type="PANTHER" id="PTHR19271:SF16">
    <property type="entry name" value="CYTOCHROME B"/>
    <property type="match status" value="1"/>
</dbReference>
<dbReference type="Pfam" id="PF00032">
    <property type="entry name" value="Cytochrom_B_C"/>
    <property type="match status" value="1"/>
</dbReference>
<dbReference type="Pfam" id="PF00033">
    <property type="entry name" value="Cytochrome_B"/>
    <property type="match status" value="1"/>
</dbReference>
<dbReference type="PIRSF" id="PIRSF038885">
    <property type="entry name" value="COB"/>
    <property type="match status" value="1"/>
</dbReference>
<dbReference type="SUPFAM" id="SSF81648">
    <property type="entry name" value="a domain/subunit of cytochrome bc1 complex (Ubiquinol-cytochrome c reductase)"/>
    <property type="match status" value="1"/>
</dbReference>
<dbReference type="SUPFAM" id="SSF81342">
    <property type="entry name" value="Transmembrane di-heme cytochromes"/>
    <property type="match status" value="1"/>
</dbReference>
<dbReference type="PROSITE" id="PS51003">
    <property type="entry name" value="CYTB_CTER"/>
    <property type="match status" value="1"/>
</dbReference>
<dbReference type="PROSITE" id="PS51002">
    <property type="entry name" value="CYTB_NTER"/>
    <property type="match status" value="1"/>
</dbReference>